<organism>
    <name type="scientific">Salmonella paratyphi A (strain ATCC 9150 / SARB42)</name>
    <dbReference type="NCBI Taxonomy" id="295319"/>
    <lineage>
        <taxon>Bacteria</taxon>
        <taxon>Pseudomonadati</taxon>
        <taxon>Pseudomonadota</taxon>
        <taxon>Gammaproteobacteria</taxon>
        <taxon>Enterobacterales</taxon>
        <taxon>Enterobacteriaceae</taxon>
        <taxon>Salmonella</taxon>
    </lineage>
</organism>
<gene>
    <name evidence="1" type="primary">der</name>
    <name type="synonym">engA</name>
    <name type="ordered locus">SPA0348</name>
</gene>
<name>DER_SALPA</name>
<evidence type="ECO:0000255" key="1">
    <source>
        <dbReference type="HAMAP-Rule" id="MF_00195"/>
    </source>
</evidence>
<proteinExistence type="inferred from homology"/>
<dbReference type="EMBL" id="CP000026">
    <property type="protein sequence ID" value="AAV76365.1"/>
    <property type="molecule type" value="Genomic_DNA"/>
</dbReference>
<dbReference type="RefSeq" id="WP_000249411.1">
    <property type="nucleotide sequence ID" value="NC_006511.1"/>
</dbReference>
<dbReference type="SMR" id="Q5PNI6"/>
<dbReference type="KEGG" id="spt:SPA0348"/>
<dbReference type="HOGENOM" id="CLU_016077_6_2_6"/>
<dbReference type="Proteomes" id="UP000008185">
    <property type="component" value="Chromosome"/>
</dbReference>
<dbReference type="GO" id="GO:0005525">
    <property type="term" value="F:GTP binding"/>
    <property type="evidence" value="ECO:0007669"/>
    <property type="project" value="UniProtKB-UniRule"/>
</dbReference>
<dbReference type="GO" id="GO:0043022">
    <property type="term" value="F:ribosome binding"/>
    <property type="evidence" value="ECO:0007669"/>
    <property type="project" value="TreeGrafter"/>
</dbReference>
<dbReference type="GO" id="GO:0042254">
    <property type="term" value="P:ribosome biogenesis"/>
    <property type="evidence" value="ECO:0007669"/>
    <property type="project" value="UniProtKB-KW"/>
</dbReference>
<dbReference type="CDD" id="cd01894">
    <property type="entry name" value="EngA1"/>
    <property type="match status" value="1"/>
</dbReference>
<dbReference type="CDD" id="cd01895">
    <property type="entry name" value="EngA2"/>
    <property type="match status" value="1"/>
</dbReference>
<dbReference type="FunFam" id="3.30.300.20:FF:000004">
    <property type="entry name" value="GTPase Der"/>
    <property type="match status" value="1"/>
</dbReference>
<dbReference type="FunFam" id="3.40.50.300:FF:000040">
    <property type="entry name" value="GTPase Der"/>
    <property type="match status" value="1"/>
</dbReference>
<dbReference type="FunFam" id="3.40.50.300:FF:000057">
    <property type="entry name" value="GTPase Der"/>
    <property type="match status" value="1"/>
</dbReference>
<dbReference type="Gene3D" id="3.30.300.20">
    <property type="match status" value="1"/>
</dbReference>
<dbReference type="Gene3D" id="3.40.50.300">
    <property type="entry name" value="P-loop containing nucleotide triphosphate hydrolases"/>
    <property type="match status" value="2"/>
</dbReference>
<dbReference type="HAMAP" id="MF_00195">
    <property type="entry name" value="GTPase_Der"/>
    <property type="match status" value="1"/>
</dbReference>
<dbReference type="InterPro" id="IPR031166">
    <property type="entry name" value="G_ENGA"/>
</dbReference>
<dbReference type="InterPro" id="IPR006073">
    <property type="entry name" value="GTP-bd"/>
</dbReference>
<dbReference type="InterPro" id="IPR016484">
    <property type="entry name" value="GTPase_Der"/>
</dbReference>
<dbReference type="InterPro" id="IPR032859">
    <property type="entry name" value="KH_dom-like"/>
</dbReference>
<dbReference type="InterPro" id="IPR015946">
    <property type="entry name" value="KH_dom-like_a/b"/>
</dbReference>
<dbReference type="InterPro" id="IPR027417">
    <property type="entry name" value="P-loop_NTPase"/>
</dbReference>
<dbReference type="InterPro" id="IPR005225">
    <property type="entry name" value="Small_GTP-bd"/>
</dbReference>
<dbReference type="NCBIfam" id="TIGR03594">
    <property type="entry name" value="GTPase_EngA"/>
    <property type="match status" value="1"/>
</dbReference>
<dbReference type="NCBIfam" id="TIGR00231">
    <property type="entry name" value="small_GTP"/>
    <property type="match status" value="2"/>
</dbReference>
<dbReference type="PANTHER" id="PTHR43834">
    <property type="entry name" value="GTPASE DER"/>
    <property type="match status" value="1"/>
</dbReference>
<dbReference type="PANTHER" id="PTHR43834:SF6">
    <property type="entry name" value="GTPASE DER"/>
    <property type="match status" value="1"/>
</dbReference>
<dbReference type="Pfam" id="PF14714">
    <property type="entry name" value="KH_dom-like"/>
    <property type="match status" value="1"/>
</dbReference>
<dbReference type="Pfam" id="PF01926">
    <property type="entry name" value="MMR_HSR1"/>
    <property type="match status" value="2"/>
</dbReference>
<dbReference type="PIRSF" id="PIRSF006485">
    <property type="entry name" value="GTP-binding_EngA"/>
    <property type="match status" value="1"/>
</dbReference>
<dbReference type="PRINTS" id="PR00326">
    <property type="entry name" value="GTP1OBG"/>
</dbReference>
<dbReference type="SUPFAM" id="SSF52540">
    <property type="entry name" value="P-loop containing nucleoside triphosphate hydrolases"/>
    <property type="match status" value="2"/>
</dbReference>
<dbReference type="PROSITE" id="PS51712">
    <property type="entry name" value="G_ENGA"/>
    <property type="match status" value="2"/>
</dbReference>
<comment type="function">
    <text evidence="1">GTPase that plays an essential role in the late steps of ribosome biogenesis.</text>
</comment>
<comment type="subunit">
    <text evidence="1">Associates with the 50S ribosomal subunit.</text>
</comment>
<comment type="similarity">
    <text evidence="1">Belongs to the TRAFAC class TrmE-Era-EngA-EngB-Septin-like GTPase superfamily. EngA (Der) GTPase family.</text>
</comment>
<accession>Q5PNI6</accession>
<protein>
    <recommendedName>
        <fullName evidence="1">GTPase Der</fullName>
    </recommendedName>
    <alternativeName>
        <fullName evidence="1">GTP-binding protein EngA</fullName>
    </alternativeName>
</protein>
<feature type="chain" id="PRO_1000011730" description="GTPase Der">
    <location>
        <begin position="1"/>
        <end position="490"/>
    </location>
</feature>
<feature type="domain" description="EngA-type G 1">
    <location>
        <begin position="3"/>
        <end position="166"/>
    </location>
</feature>
<feature type="domain" description="EngA-type G 2">
    <location>
        <begin position="203"/>
        <end position="376"/>
    </location>
</feature>
<feature type="domain" description="KH-like" evidence="1">
    <location>
        <begin position="377"/>
        <end position="461"/>
    </location>
</feature>
<feature type="binding site" evidence="1">
    <location>
        <begin position="9"/>
        <end position="16"/>
    </location>
    <ligand>
        <name>GTP</name>
        <dbReference type="ChEBI" id="CHEBI:37565"/>
        <label>1</label>
    </ligand>
</feature>
<feature type="binding site" evidence="1">
    <location>
        <begin position="56"/>
        <end position="60"/>
    </location>
    <ligand>
        <name>GTP</name>
        <dbReference type="ChEBI" id="CHEBI:37565"/>
        <label>1</label>
    </ligand>
</feature>
<feature type="binding site" evidence="1">
    <location>
        <begin position="118"/>
        <end position="121"/>
    </location>
    <ligand>
        <name>GTP</name>
        <dbReference type="ChEBI" id="CHEBI:37565"/>
        <label>1</label>
    </ligand>
</feature>
<feature type="binding site" evidence="1">
    <location>
        <begin position="209"/>
        <end position="216"/>
    </location>
    <ligand>
        <name>GTP</name>
        <dbReference type="ChEBI" id="CHEBI:37565"/>
        <label>2</label>
    </ligand>
</feature>
<feature type="binding site" evidence="1">
    <location>
        <begin position="256"/>
        <end position="260"/>
    </location>
    <ligand>
        <name>GTP</name>
        <dbReference type="ChEBI" id="CHEBI:37565"/>
        <label>2</label>
    </ligand>
</feature>
<feature type="binding site" evidence="1">
    <location>
        <begin position="321"/>
        <end position="324"/>
    </location>
    <ligand>
        <name>GTP</name>
        <dbReference type="ChEBI" id="CHEBI:37565"/>
        <label>2</label>
    </ligand>
</feature>
<keyword id="KW-0342">GTP-binding</keyword>
<keyword id="KW-0547">Nucleotide-binding</keyword>
<keyword id="KW-0677">Repeat</keyword>
<keyword id="KW-0690">Ribosome biogenesis</keyword>
<reference key="1">
    <citation type="journal article" date="2004" name="Nat. Genet.">
        <title>Comparison of genome degradation in Paratyphi A and Typhi, human-restricted serovars of Salmonella enterica that cause typhoid.</title>
        <authorList>
            <person name="McClelland M."/>
            <person name="Sanderson K.E."/>
            <person name="Clifton S.W."/>
            <person name="Latreille P."/>
            <person name="Porwollik S."/>
            <person name="Sabo A."/>
            <person name="Meyer R."/>
            <person name="Bieri T."/>
            <person name="Ozersky P."/>
            <person name="McLellan M."/>
            <person name="Harkins C.R."/>
            <person name="Wang C."/>
            <person name="Nguyen C."/>
            <person name="Berghoff A."/>
            <person name="Elliott G."/>
            <person name="Kohlberg S."/>
            <person name="Strong C."/>
            <person name="Du F."/>
            <person name="Carter J."/>
            <person name="Kremizki C."/>
            <person name="Layman D."/>
            <person name="Leonard S."/>
            <person name="Sun H."/>
            <person name="Fulton L."/>
            <person name="Nash W."/>
            <person name="Miner T."/>
            <person name="Minx P."/>
            <person name="Delehaunty K."/>
            <person name="Fronick C."/>
            <person name="Magrini V."/>
            <person name="Nhan M."/>
            <person name="Warren W."/>
            <person name="Florea L."/>
            <person name="Spieth J."/>
            <person name="Wilson R.K."/>
        </authorList>
    </citation>
    <scope>NUCLEOTIDE SEQUENCE [LARGE SCALE GENOMIC DNA]</scope>
    <source>
        <strain>ATCC 9150 / SARB42</strain>
    </source>
</reference>
<sequence length="490" mass="54972">MVPVVALVGRPNVGKSTLFNRLTRTRDALVADFPGLTRDRKYGRAEVEGREFICIDTGGIDGTEDGVETRMAEQSLLAIEEADVVLFMVDARAGLMPADEAIAKHLRSREKPTFLVANKTDGLDPDQAVVDFYSLGLGEIYPIAASHGRGVLSLLEHVLLPWMDDVAPQEEVDEDAEYWAQFEAEQNGEEAPEDDFDPQSLPIKLAIVGRPNVGKSTLTNRILGEERVVVYDMPGTTRDSIYIPMERDEREYVLIDTAGVRKRGKITDAVEKFSVIKTLQAIEDANVVLLVIDAREGISDQDLSLLGFILNSGRSLVIVVNKWDGLSQEVKEQVKETLDFRLGFIDFARVHFISALHGSGVGNLFESVREAYDSSTRRVSTAMLTRIMTMAVEDHQPPLVRGRRVKLKYAHAGGYNPPIVVIHGNQVKDLPDSYKRYLMNYFRKSLEVMGTPIRIQFKEGENPYANKRNTLTPTQMRKRKRLMKHIKKSK</sequence>